<gene>
    <name evidence="1" type="primary">aroC</name>
    <name type="ordered locus">YG5714_1912</name>
</gene>
<accession>C3N7H4</accession>
<evidence type="ECO:0000255" key="1">
    <source>
        <dbReference type="HAMAP-Rule" id="MF_00300"/>
    </source>
</evidence>
<sequence>MPGNSFGKLFRVTTFGESHGPAVGVVIDGVPAGLPLTVEDIKFELEFRRPGRLYVSGRREKDEPEILSGIFNNRTTGSPIAVIVRNTDVISSFYEEIRYKPRPGHADLPFIMKYGYENWDYRGGGRASARETVGRVIAGAVAKKLLMLADTWIAGHLRSLGPEELNEEVTFEEVLCSKYSPVRASKKVLEEKYEALIKKATQEGDSYGGIAEVITKNPPIGLGEPVFDKMKAELAKAIMSIPAVTGFEYGLGFMVSKMKGSEANDEIIRKDNKIGWKYNYAGGILGGLTNGEDLIVRCAFKPTSSIRKPQKTIDLRNLEETYISVIGRHDPAVAIRGVTVVESMVALTLVDHAMRAGVIPLVKLTEEQGNIVQQRWERYVRSCKPMEESQL</sequence>
<comment type="function">
    <text evidence="1">Catalyzes the anti-1,4-elimination of the C-3 phosphate and the C-6 proR hydrogen from 5-enolpyruvylshikimate-3-phosphate (EPSP) to yield chorismate, which is the branch point compound that serves as the starting substrate for the three terminal pathways of aromatic amino acid biosynthesis. This reaction introduces a second double bond into the aromatic ring system.</text>
</comment>
<comment type="catalytic activity">
    <reaction evidence="1">
        <text>5-O-(1-carboxyvinyl)-3-phosphoshikimate = chorismate + phosphate</text>
        <dbReference type="Rhea" id="RHEA:21020"/>
        <dbReference type="ChEBI" id="CHEBI:29748"/>
        <dbReference type="ChEBI" id="CHEBI:43474"/>
        <dbReference type="ChEBI" id="CHEBI:57701"/>
        <dbReference type="EC" id="4.2.3.5"/>
    </reaction>
</comment>
<comment type="cofactor">
    <cofactor evidence="1">
        <name>FMNH2</name>
        <dbReference type="ChEBI" id="CHEBI:57618"/>
    </cofactor>
    <text evidence="1">Reduced FMN (FMNH(2)).</text>
</comment>
<comment type="pathway">
    <text evidence="1">Metabolic intermediate biosynthesis; chorismate biosynthesis; chorismate from D-erythrose 4-phosphate and phosphoenolpyruvate: step 7/7.</text>
</comment>
<comment type="similarity">
    <text evidence="1">Belongs to the chorismate synthase family.</text>
</comment>
<protein>
    <recommendedName>
        <fullName evidence="1">Chorismate synthase</fullName>
        <shortName evidence="1">CS</shortName>
        <ecNumber evidence="1">4.2.3.5</ecNumber>
    </recommendedName>
    <alternativeName>
        <fullName evidence="1">5-enolpyruvylshikimate-3-phosphate phospholyase</fullName>
    </alternativeName>
</protein>
<proteinExistence type="inferred from homology"/>
<keyword id="KW-0028">Amino-acid biosynthesis</keyword>
<keyword id="KW-0057">Aromatic amino acid biosynthesis</keyword>
<keyword id="KW-0274">FAD</keyword>
<keyword id="KW-0285">Flavoprotein</keyword>
<keyword id="KW-0288">FMN</keyword>
<keyword id="KW-0456">Lyase</keyword>
<keyword id="KW-0521">NADP</keyword>
<organism>
    <name type="scientific">Saccharolobus islandicus (strain Y.G.57.14 / Yellowstone #1)</name>
    <name type="common">Sulfolobus islandicus</name>
    <dbReference type="NCBI Taxonomy" id="439386"/>
    <lineage>
        <taxon>Archaea</taxon>
        <taxon>Thermoproteota</taxon>
        <taxon>Thermoprotei</taxon>
        <taxon>Sulfolobales</taxon>
        <taxon>Sulfolobaceae</taxon>
        <taxon>Saccharolobus</taxon>
    </lineage>
</organism>
<dbReference type="EC" id="4.2.3.5" evidence="1"/>
<dbReference type="EMBL" id="CP001403">
    <property type="protein sequence ID" value="ACP46168.1"/>
    <property type="molecule type" value="Genomic_DNA"/>
</dbReference>
<dbReference type="RefSeq" id="WP_012711770.1">
    <property type="nucleotide sequence ID" value="NC_012622.1"/>
</dbReference>
<dbReference type="SMR" id="C3N7H4"/>
<dbReference type="GeneID" id="84062147"/>
<dbReference type="KEGG" id="siy:YG5714_1912"/>
<dbReference type="HOGENOM" id="CLU_034547_0_0_2"/>
<dbReference type="UniPathway" id="UPA00053">
    <property type="reaction ID" value="UER00090"/>
</dbReference>
<dbReference type="Proteomes" id="UP000002308">
    <property type="component" value="Chromosome"/>
</dbReference>
<dbReference type="GO" id="GO:0005829">
    <property type="term" value="C:cytosol"/>
    <property type="evidence" value="ECO:0007669"/>
    <property type="project" value="TreeGrafter"/>
</dbReference>
<dbReference type="GO" id="GO:0004107">
    <property type="term" value="F:chorismate synthase activity"/>
    <property type="evidence" value="ECO:0007669"/>
    <property type="project" value="UniProtKB-UniRule"/>
</dbReference>
<dbReference type="GO" id="GO:0010181">
    <property type="term" value="F:FMN binding"/>
    <property type="evidence" value="ECO:0007669"/>
    <property type="project" value="TreeGrafter"/>
</dbReference>
<dbReference type="GO" id="GO:0008652">
    <property type="term" value="P:amino acid biosynthetic process"/>
    <property type="evidence" value="ECO:0007669"/>
    <property type="project" value="UniProtKB-KW"/>
</dbReference>
<dbReference type="GO" id="GO:0009073">
    <property type="term" value="P:aromatic amino acid family biosynthetic process"/>
    <property type="evidence" value="ECO:0007669"/>
    <property type="project" value="UniProtKB-KW"/>
</dbReference>
<dbReference type="GO" id="GO:0009423">
    <property type="term" value="P:chorismate biosynthetic process"/>
    <property type="evidence" value="ECO:0007669"/>
    <property type="project" value="UniProtKB-UniRule"/>
</dbReference>
<dbReference type="CDD" id="cd07304">
    <property type="entry name" value="Chorismate_synthase"/>
    <property type="match status" value="1"/>
</dbReference>
<dbReference type="FunFam" id="3.60.150.10:FF:000002">
    <property type="entry name" value="Chorismate synthase"/>
    <property type="match status" value="1"/>
</dbReference>
<dbReference type="Gene3D" id="3.60.150.10">
    <property type="entry name" value="Chorismate synthase AroC"/>
    <property type="match status" value="1"/>
</dbReference>
<dbReference type="HAMAP" id="MF_00300">
    <property type="entry name" value="Chorismate_synth"/>
    <property type="match status" value="1"/>
</dbReference>
<dbReference type="InterPro" id="IPR000453">
    <property type="entry name" value="Chorismate_synth"/>
</dbReference>
<dbReference type="InterPro" id="IPR035904">
    <property type="entry name" value="Chorismate_synth_AroC_sf"/>
</dbReference>
<dbReference type="InterPro" id="IPR020541">
    <property type="entry name" value="Chorismate_synthase_CS"/>
</dbReference>
<dbReference type="NCBIfam" id="TIGR00033">
    <property type="entry name" value="aroC"/>
    <property type="match status" value="1"/>
</dbReference>
<dbReference type="NCBIfam" id="NF003793">
    <property type="entry name" value="PRK05382.1"/>
    <property type="match status" value="1"/>
</dbReference>
<dbReference type="PANTHER" id="PTHR21085">
    <property type="entry name" value="CHORISMATE SYNTHASE"/>
    <property type="match status" value="1"/>
</dbReference>
<dbReference type="PANTHER" id="PTHR21085:SF0">
    <property type="entry name" value="CHORISMATE SYNTHASE"/>
    <property type="match status" value="1"/>
</dbReference>
<dbReference type="Pfam" id="PF01264">
    <property type="entry name" value="Chorismate_synt"/>
    <property type="match status" value="1"/>
</dbReference>
<dbReference type="PIRSF" id="PIRSF001456">
    <property type="entry name" value="Chorismate_synth"/>
    <property type="match status" value="1"/>
</dbReference>
<dbReference type="SUPFAM" id="SSF103263">
    <property type="entry name" value="Chorismate synthase, AroC"/>
    <property type="match status" value="1"/>
</dbReference>
<dbReference type="PROSITE" id="PS00787">
    <property type="entry name" value="CHORISMATE_SYNTHASE_1"/>
    <property type="match status" value="1"/>
</dbReference>
<dbReference type="PROSITE" id="PS00788">
    <property type="entry name" value="CHORISMATE_SYNTHASE_2"/>
    <property type="match status" value="1"/>
</dbReference>
<dbReference type="PROSITE" id="PS00789">
    <property type="entry name" value="CHORISMATE_SYNTHASE_3"/>
    <property type="match status" value="1"/>
</dbReference>
<name>AROC_SACI7</name>
<feature type="chain" id="PRO_1000204964" description="Chorismate synthase">
    <location>
        <begin position="1"/>
        <end position="391"/>
    </location>
</feature>
<feature type="binding site" evidence="1">
    <location>
        <position position="48"/>
    </location>
    <ligand>
        <name>NADP(+)</name>
        <dbReference type="ChEBI" id="CHEBI:58349"/>
    </ligand>
</feature>
<feature type="binding site" evidence="1">
    <location>
        <begin position="126"/>
        <end position="128"/>
    </location>
    <ligand>
        <name>FMN</name>
        <dbReference type="ChEBI" id="CHEBI:58210"/>
    </ligand>
</feature>
<feature type="binding site" evidence="1">
    <location>
        <position position="286"/>
    </location>
    <ligand>
        <name>FMN</name>
        <dbReference type="ChEBI" id="CHEBI:58210"/>
    </ligand>
</feature>
<feature type="binding site" evidence="1">
    <location>
        <begin position="301"/>
        <end position="305"/>
    </location>
    <ligand>
        <name>FMN</name>
        <dbReference type="ChEBI" id="CHEBI:58210"/>
    </ligand>
</feature>
<feature type="binding site" evidence="1">
    <location>
        <position position="328"/>
    </location>
    <ligand>
        <name>FMN</name>
        <dbReference type="ChEBI" id="CHEBI:58210"/>
    </ligand>
</feature>
<reference key="1">
    <citation type="journal article" date="2009" name="Proc. Natl. Acad. Sci. U.S.A.">
        <title>Biogeography of the Sulfolobus islandicus pan-genome.</title>
        <authorList>
            <person name="Reno M.L."/>
            <person name="Held N.L."/>
            <person name="Fields C.J."/>
            <person name="Burke P.V."/>
            <person name="Whitaker R.J."/>
        </authorList>
    </citation>
    <scope>NUCLEOTIDE SEQUENCE [LARGE SCALE GENOMIC DNA]</scope>
    <source>
        <strain>Y.G.57.14 / Yellowstone #1</strain>
    </source>
</reference>